<sequence>MQTVMMDDIQSTDSIAEKDNHSNNESNFTWKAFREQVEKHFSKIERLHQVLGTDGDNSSLFELFTTAMNAQLHEMEQCQKKLEDDCQQRIDSIRFLVSSLKLTDDTSSLKIESPLIQCLNRLSMVEGQYMAQYDQKLSTIKEMYHKLESYCNRLGSPFVLPDFENSFLSDVSDAFTESLRGRINEAEKEIDARLEVINSFEEEILGLWSELGVEPADVPQYEQLLESHTNRPNDVYVTQELIDQLCKQKEVFSAEKEKRSDHLKSIQSEVSNLWNKLQVSPNEQSQFGDSSNINQENISLWETELEKLHQLKKEHLPIFLEDCRQQILQLWDSLFYSEEQRKSFTPMYEDIITEQVLTAHENYIKQLEAEVSANKSFLSLINRYASLIEGKKELEASSNDASRLTQRGRRDPGLLLREEKIRKRLSRELPKVQSLLIPEITAWEERNGRTFLFYDEPLLKICQEATQPKSLYRSASAAANRPKTATTTDSVNRTPSQRGRVAVPSTPSVRSASRAMTSPRTPLPRVKNTQNPSRSISAEPPSATSTANRRHPTANRIDINARLNSASRSRSANMIRQGANGSDSNMSSSPVSGNSNTPFNKFPNSVSRNTHFESKSPHPNYSRTPHETYSKASSKNVPLSPPKQRVVNEHALNIMSEKLQRTNLKEQTPEMDIENSSQNLPFSPMKISPIRASPVKTIPSSPSPTTNIFSAPLNNITNCTPMEDEWGEEGF</sequence>
<proteinExistence type="evidence at protein level"/>
<organism>
    <name type="scientific">Schizosaccharomyces pombe (strain 972 / ATCC 24843)</name>
    <name type="common">Fission yeast</name>
    <dbReference type="NCBI Taxonomy" id="284812"/>
    <lineage>
        <taxon>Eukaryota</taxon>
        <taxon>Fungi</taxon>
        <taxon>Dikarya</taxon>
        <taxon>Ascomycota</taxon>
        <taxon>Taphrinomycotina</taxon>
        <taxon>Schizosaccharomycetes</taxon>
        <taxon>Schizosaccharomycetales</taxon>
        <taxon>Schizosaccharomycetaceae</taxon>
        <taxon>Schizosaccharomyces</taxon>
    </lineage>
</organism>
<dbReference type="EMBL" id="CU329670">
    <property type="protein sequence ID" value="CAC21482.1"/>
    <property type="molecule type" value="Genomic_DNA"/>
</dbReference>
<dbReference type="RefSeq" id="NP_593523.1">
    <property type="nucleotide sequence ID" value="NM_001018957.2"/>
</dbReference>
<dbReference type="SMR" id="Q9HDY1"/>
<dbReference type="BioGRID" id="279794">
    <property type="interactions" value="206"/>
</dbReference>
<dbReference type="FunCoup" id="Q9HDY1">
    <property type="interactions" value="278"/>
</dbReference>
<dbReference type="STRING" id="284812.Q9HDY1"/>
<dbReference type="iPTMnet" id="Q9HDY1"/>
<dbReference type="PaxDb" id="4896-SPAPB1A10.09.1"/>
<dbReference type="EnsemblFungi" id="SPAPB1A10.09.1">
    <property type="protein sequence ID" value="SPAPB1A10.09.1:pep"/>
    <property type="gene ID" value="SPAPB1A10.09"/>
</dbReference>
<dbReference type="GeneID" id="2543372"/>
<dbReference type="KEGG" id="spo:2543372"/>
<dbReference type="PomBase" id="SPAPB1A10.09">
    <property type="gene designation" value="ase1"/>
</dbReference>
<dbReference type="VEuPathDB" id="FungiDB:SPAPB1A10.09"/>
<dbReference type="eggNOG" id="KOG4302">
    <property type="taxonomic scope" value="Eukaryota"/>
</dbReference>
<dbReference type="HOGENOM" id="CLU_379049_0_0_1"/>
<dbReference type="InParanoid" id="Q9HDY1"/>
<dbReference type="OMA" id="QLHGIYD"/>
<dbReference type="PhylomeDB" id="Q9HDY1"/>
<dbReference type="PRO" id="PR:Q9HDY1"/>
<dbReference type="Proteomes" id="UP000002485">
    <property type="component" value="Chromosome I"/>
</dbReference>
<dbReference type="GO" id="GO:0055028">
    <property type="term" value="C:cortical microtubule"/>
    <property type="evidence" value="ECO:0000314"/>
    <property type="project" value="PomBase"/>
</dbReference>
<dbReference type="GO" id="GO:0005737">
    <property type="term" value="C:cytoplasm"/>
    <property type="evidence" value="ECO:0000318"/>
    <property type="project" value="GO_Central"/>
</dbReference>
<dbReference type="GO" id="GO:0005881">
    <property type="term" value="C:cytoplasmic microtubule"/>
    <property type="evidence" value="ECO:0000314"/>
    <property type="project" value="PomBase"/>
</dbReference>
<dbReference type="GO" id="GO:0000923">
    <property type="term" value="C:equatorial microtubule organizing center"/>
    <property type="evidence" value="ECO:0000314"/>
    <property type="project" value="PomBase"/>
</dbReference>
<dbReference type="GO" id="GO:1990385">
    <property type="term" value="C:meiotic spindle midzone"/>
    <property type="evidence" value="ECO:0000315"/>
    <property type="project" value="PomBase"/>
</dbReference>
<dbReference type="GO" id="GO:0015630">
    <property type="term" value="C:microtubule cytoskeleton"/>
    <property type="evidence" value="ECO:0007005"/>
    <property type="project" value="PomBase"/>
</dbReference>
<dbReference type="GO" id="GO:1990498">
    <property type="term" value="C:mitotic spindle microtubule"/>
    <property type="evidence" value="ECO:0000314"/>
    <property type="project" value="PomBase"/>
</dbReference>
<dbReference type="GO" id="GO:1990023">
    <property type="term" value="C:mitotic spindle midzone"/>
    <property type="evidence" value="ECO:0000314"/>
    <property type="project" value="PomBase"/>
</dbReference>
<dbReference type="GO" id="GO:0005634">
    <property type="term" value="C:nucleus"/>
    <property type="evidence" value="ECO:0000305"/>
    <property type="project" value="PomBase"/>
</dbReference>
<dbReference type="GO" id="GO:0005827">
    <property type="term" value="C:polar microtubule"/>
    <property type="evidence" value="ECO:0000314"/>
    <property type="project" value="PomBase"/>
</dbReference>
<dbReference type="GO" id="GO:1905759">
    <property type="term" value="C:post-anaphase array microtubule"/>
    <property type="evidence" value="ECO:0000314"/>
    <property type="project" value="PomBase"/>
</dbReference>
<dbReference type="GO" id="GO:1990295">
    <property type="term" value="C:post-anaphase microtubule array"/>
    <property type="evidence" value="ECO:0000269"/>
    <property type="project" value="PomBase"/>
</dbReference>
<dbReference type="GO" id="GO:0005819">
    <property type="term" value="C:spindle"/>
    <property type="evidence" value="ECO:0000318"/>
    <property type="project" value="GO_Central"/>
</dbReference>
<dbReference type="GO" id="GO:0099070">
    <property type="term" value="C:static microtubule bundle"/>
    <property type="evidence" value="ECO:0000314"/>
    <property type="project" value="PomBase"/>
</dbReference>
<dbReference type="GO" id="GO:0008017">
    <property type="term" value="F:microtubule binding"/>
    <property type="evidence" value="ECO:0000314"/>
    <property type="project" value="PomBase"/>
</dbReference>
<dbReference type="GO" id="GO:0099609">
    <property type="term" value="F:microtubule lateral binding"/>
    <property type="evidence" value="ECO:0000314"/>
    <property type="project" value="PomBase"/>
</dbReference>
<dbReference type="GO" id="GO:0051301">
    <property type="term" value="P:cell division"/>
    <property type="evidence" value="ECO:0007669"/>
    <property type="project" value="UniProtKB-KW"/>
</dbReference>
<dbReference type="GO" id="GO:0030989">
    <property type="term" value="P:dynein-driven meiotic oscillatory nuclear movement"/>
    <property type="evidence" value="ECO:0000315"/>
    <property type="project" value="PomBase"/>
</dbReference>
<dbReference type="GO" id="GO:0032118">
    <property type="term" value="P:horsetail-astral microtubule organization"/>
    <property type="evidence" value="ECO:0000315"/>
    <property type="project" value="PomBase"/>
</dbReference>
<dbReference type="GO" id="GO:0051232">
    <property type="term" value="P:meiotic spindle elongation"/>
    <property type="evidence" value="ECO:0000269"/>
    <property type="project" value="PomBase"/>
</dbReference>
<dbReference type="GO" id="GO:0140642">
    <property type="term" value="P:meiotic spindle formation (spindle phase two)"/>
    <property type="evidence" value="ECO:0000315"/>
    <property type="project" value="PomBase"/>
</dbReference>
<dbReference type="GO" id="GO:0001578">
    <property type="term" value="P:microtubule bundle formation"/>
    <property type="evidence" value="ECO:0000315"/>
    <property type="project" value="PomBase"/>
</dbReference>
<dbReference type="GO" id="GO:0000226">
    <property type="term" value="P:microtubule cytoskeleton organization"/>
    <property type="evidence" value="ECO:0000318"/>
    <property type="project" value="GO_Central"/>
</dbReference>
<dbReference type="GO" id="GO:0044878">
    <property type="term" value="P:mitotic cytokinesis checkpoint signaling"/>
    <property type="evidence" value="ECO:0000316"/>
    <property type="project" value="PomBase"/>
</dbReference>
<dbReference type="GO" id="GO:0140515">
    <property type="term" value="P:mitotic nuclear bridge organization"/>
    <property type="evidence" value="ECO:0000315"/>
    <property type="project" value="PomBase"/>
</dbReference>
<dbReference type="GO" id="GO:0000022">
    <property type="term" value="P:mitotic spindle elongation"/>
    <property type="evidence" value="ECO:0000315"/>
    <property type="project" value="PomBase"/>
</dbReference>
<dbReference type="GO" id="GO:0061804">
    <property type="term" value="P:mitotic spindle formation (spindle phase one)"/>
    <property type="evidence" value="ECO:0000315"/>
    <property type="project" value="PomBase"/>
</dbReference>
<dbReference type="GO" id="GO:0140641">
    <property type="term" value="P:mitotic spindle formation (spindle phase two)"/>
    <property type="evidence" value="ECO:0000315"/>
    <property type="project" value="PomBase"/>
</dbReference>
<dbReference type="GO" id="GO:0051256">
    <property type="term" value="P:mitotic spindle midzone assembly"/>
    <property type="evidence" value="ECO:0000314"/>
    <property type="project" value="PomBase"/>
</dbReference>
<dbReference type="GO" id="GO:0062168">
    <property type="term" value="P:negative regulation of plus-end directed microtubule sliding"/>
    <property type="evidence" value="ECO:0000314"/>
    <property type="project" value="PomBase"/>
</dbReference>
<dbReference type="GO" id="GO:0098863">
    <property type="term" value="P:nuclear migration by microtubule mediated pushing forces"/>
    <property type="evidence" value="ECO:0000315"/>
    <property type="project" value="PomBase"/>
</dbReference>
<dbReference type="Gene3D" id="1.20.58.1520">
    <property type="match status" value="1"/>
</dbReference>
<dbReference type="InterPro" id="IPR007145">
    <property type="entry name" value="MAP65_Ase1_PRC1"/>
</dbReference>
<dbReference type="PANTHER" id="PTHR19321:SF41">
    <property type="entry name" value="FASCETTO-RELATED"/>
    <property type="match status" value="1"/>
</dbReference>
<dbReference type="PANTHER" id="PTHR19321">
    <property type="entry name" value="PROTEIN REGULATOR OF CYTOKINESIS 1 PRC1-RELATED"/>
    <property type="match status" value="1"/>
</dbReference>
<dbReference type="Pfam" id="PF03999">
    <property type="entry name" value="MAP65_ASE1"/>
    <property type="match status" value="1"/>
</dbReference>
<dbReference type="SUPFAM" id="SSF46966">
    <property type="entry name" value="Spectrin repeat"/>
    <property type="match status" value="1"/>
</dbReference>
<evidence type="ECO:0000256" key="1">
    <source>
        <dbReference type="SAM" id="MobiDB-lite"/>
    </source>
</evidence>
<evidence type="ECO:0000269" key="2">
    <source>
    </source>
</evidence>
<evidence type="ECO:0000269" key="3">
    <source>
    </source>
</evidence>
<evidence type="ECO:0000269" key="4">
    <source>
    </source>
</evidence>
<evidence type="ECO:0000305" key="5"/>
<reference key="1">
    <citation type="journal article" date="2002" name="Nature">
        <title>The genome sequence of Schizosaccharomyces pombe.</title>
        <authorList>
            <person name="Wood V."/>
            <person name="Gwilliam R."/>
            <person name="Rajandream M.A."/>
            <person name="Lyne M.H."/>
            <person name="Lyne R."/>
            <person name="Stewart A."/>
            <person name="Sgouros J.G."/>
            <person name="Peat N."/>
            <person name="Hayles J."/>
            <person name="Baker S.G."/>
            <person name="Basham D."/>
            <person name="Bowman S."/>
            <person name="Brooks K."/>
            <person name="Brown D."/>
            <person name="Brown S."/>
            <person name="Chillingworth T."/>
            <person name="Churcher C.M."/>
            <person name="Collins M."/>
            <person name="Connor R."/>
            <person name="Cronin A."/>
            <person name="Davis P."/>
            <person name="Feltwell T."/>
            <person name="Fraser A."/>
            <person name="Gentles S."/>
            <person name="Goble A."/>
            <person name="Hamlin N."/>
            <person name="Harris D.E."/>
            <person name="Hidalgo J."/>
            <person name="Hodgson G."/>
            <person name="Holroyd S."/>
            <person name="Hornsby T."/>
            <person name="Howarth S."/>
            <person name="Huckle E.J."/>
            <person name="Hunt S."/>
            <person name="Jagels K."/>
            <person name="James K.D."/>
            <person name="Jones L."/>
            <person name="Jones M."/>
            <person name="Leather S."/>
            <person name="McDonald S."/>
            <person name="McLean J."/>
            <person name="Mooney P."/>
            <person name="Moule S."/>
            <person name="Mungall K.L."/>
            <person name="Murphy L.D."/>
            <person name="Niblett D."/>
            <person name="Odell C."/>
            <person name="Oliver K."/>
            <person name="O'Neil S."/>
            <person name="Pearson D."/>
            <person name="Quail M.A."/>
            <person name="Rabbinowitsch E."/>
            <person name="Rutherford K.M."/>
            <person name="Rutter S."/>
            <person name="Saunders D."/>
            <person name="Seeger K."/>
            <person name="Sharp S."/>
            <person name="Skelton J."/>
            <person name="Simmonds M.N."/>
            <person name="Squares R."/>
            <person name="Squares S."/>
            <person name="Stevens K."/>
            <person name="Taylor K."/>
            <person name="Taylor R.G."/>
            <person name="Tivey A."/>
            <person name="Walsh S.V."/>
            <person name="Warren T."/>
            <person name="Whitehead S."/>
            <person name="Woodward J.R."/>
            <person name="Volckaert G."/>
            <person name="Aert R."/>
            <person name="Robben J."/>
            <person name="Grymonprez B."/>
            <person name="Weltjens I."/>
            <person name="Vanstreels E."/>
            <person name="Rieger M."/>
            <person name="Schaefer M."/>
            <person name="Mueller-Auer S."/>
            <person name="Gabel C."/>
            <person name="Fuchs M."/>
            <person name="Duesterhoeft A."/>
            <person name="Fritzc C."/>
            <person name="Holzer E."/>
            <person name="Moestl D."/>
            <person name="Hilbert H."/>
            <person name="Borzym K."/>
            <person name="Langer I."/>
            <person name="Beck A."/>
            <person name="Lehrach H."/>
            <person name="Reinhardt R."/>
            <person name="Pohl T.M."/>
            <person name="Eger P."/>
            <person name="Zimmermann W."/>
            <person name="Wedler H."/>
            <person name="Wambutt R."/>
            <person name="Purnelle B."/>
            <person name="Goffeau A."/>
            <person name="Cadieu E."/>
            <person name="Dreano S."/>
            <person name="Gloux S."/>
            <person name="Lelaure V."/>
            <person name="Mottier S."/>
            <person name="Galibert F."/>
            <person name="Aves S.J."/>
            <person name="Xiang Z."/>
            <person name="Hunt C."/>
            <person name="Moore K."/>
            <person name="Hurst S.M."/>
            <person name="Lucas M."/>
            <person name="Rochet M."/>
            <person name="Gaillardin C."/>
            <person name="Tallada V.A."/>
            <person name="Garzon A."/>
            <person name="Thode G."/>
            <person name="Daga R.R."/>
            <person name="Cruzado L."/>
            <person name="Jimenez J."/>
            <person name="Sanchez M."/>
            <person name="del Rey F."/>
            <person name="Benito J."/>
            <person name="Dominguez A."/>
            <person name="Revuelta J.L."/>
            <person name="Moreno S."/>
            <person name="Armstrong J."/>
            <person name="Forsburg S.L."/>
            <person name="Cerutti L."/>
            <person name="Lowe T."/>
            <person name="McCombie W.R."/>
            <person name="Paulsen I."/>
            <person name="Potashkin J."/>
            <person name="Shpakovski G.V."/>
            <person name="Ussery D."/>
            <person name="Barrell B.G."/>
            <person name="Nurse P."/>
        </authorList>
    </citation>
    <scope>NUCLEOTIDE SEQUENCE [LARGE SCALE GENOMIC DNA]</scope>
    <source>
        <strain>972 / ATCC 24843</strain>
    </source>
</reference>
<reference key="2">
    <citation type="journal article" date="2005" name="Mol. Biol. Cell">
        <title>The roles of fission yeast ase1 in mitotic cell division, meiotic nuclear oscillation, and cytokinesis checkpoint signaling.</title>
        <authorList>
            <person name="Yamashita A."/>
            <person name="Sato M."/>
            <person name="Fujita A."/>
            <person name="Yamamoto M."/>
            <person name="Toda T."/>
        </authorList>
    </citation>
    <scope>FUNCTION</scope>
    <scope>SUBCELLULAR LOCATION</scope>
</reference>
<reference key="3">
    <citation type="journal article" date="2006" name="Nat. Biotechnol.">
        <title>ORFeome cloning and global analysis of protein localization in the fission yeast Schizosaccharomyces pombe.</title>
        <authorList>
            <person name="Matsuyama A."/>
            <person name="Arai R."/>
            <person name="Yashiroda Y."/>
            <person name="Shirai A."/>
            <person name="Kamata A."/>
            <person name="Sekido S."/>
            <person name="Kobayashi Y."/>
            <person name="Hashimoto A."/>
            <person name="Hamamoto M."/>
            <person name="Hiraoka Y."/>
            <person name="Horinouchi S."/>
            <person name="Yoshida M."/>
        </authorList>
    </citation>
    <scope>SUBCELLULAR LOCATION [LARGE SCALE ANALYSIS]</scope>
</reference>
<reference key="4">
    <citation type="journal article" date="2008" name="J. Proteome Res.">
        <title>Phosphoproteome analysis of fission yeast.</title>
        <authorList>
            <person name="Wilson-Grady J.T."/>
            <person name="Villen J."/>
            <person name="Gygi S.P."/>
        </authorList>
    </citation>
    <scope>PHOSPHORYLATION [LARGE SCALE ANALYSIS] AT SER-537</scope>
    <scope>IDENTIFICATION BY MASS SPECTROMETRY</scope>
</reference>
<reference key="5">
    <citation type="journal article" date="2009" name="Dev. Cell">
        <title>Phospho-regulated interaction between kinesin-6 Klp9p and microtubule bundler Ase1p promotes spindle elongation.</title>
        <authorList>
            <person name="Fu C."/>
            <person name="Ward J.J."/>
            <person name="Loiodice I."/>
            <person name="Velve-Casquillas G."/>
            <person name="Nedelec F.J."/>
            <person name="Tran P.T."/>
        </authorList>
    </citation>
    <scope>FUNCTION</scope>
    <scope>SUBCELLULAR LOCATION</scope>
    <scope>INTERACTION WITH KLP9</scope>
</reference>
<name>ASE1_SCHPO</name>
<keyword id="KW-0131">Cell cycle</keyword>
<keyword id="KW-0132">Cell division</keyword>
<keyword id="KW-0963">Cytoplasm</keyword>
<keyword id="KW-0206">Cytoskeleton</keyword>
<keyword id="KW-0493">Microtubule</keyword>
<keyword id="KW-0498">Mitosis</keyword>
<keyword id="KW-0597">Phosphoprotein</keyword>
<keyword id="KW-1185">Reference proteome</keyword>
<comment type="function">
    <text evidence="2 4">Required for anaphase spindle elongation and microtubule bundling in both interphase and mitosis. Has a role in spatial and temporal regulation of septation and cytokinesis and ensures equal partition of segregating sister chromatids. Ensures correct midzone positioning of protein kinase ark1. Acts as a regulatory component at cytokinesis checkpoint where it inhibits nuclear division when actomyosin ring formation is impaired.</text>
</comment>
<comment type="subunit">
    <text evidence="4">Interacts with klp9.</text>
</comment>
<comment type="subcellular location">
    <subcellularLocation>
        <location>Cytoplasm</location>
        <location>Cytoskeleton</location>
    </subcellularLocation>
    <subcellularLocation>
        <location>Cytoplasm</location>
        <location>Cytoskeleton</location>
        <location>Spindle</location>
    </subcellularLocation>
    <text>Localizes to microtubule overlapping zones during interphase and spindle midzone during anaphase.</text>
</comment>
<comment type="similarity">
    <text evidence="5">Belongs to the MAP65/ASE1 family.</text>
</comment>
<feature type="chain" id="PRO_0000363368" description="Anaphase spindle elongation protein 1">
    <location>
        <begin position="1"/>
        <end position="731"/>
    </location>
</feature>
<feature type="region of interest" description="Disordered" evidence="1">
    <location>
        <begin position="472"/>
        <end position="642"/>
    </location>
</feature>
<feature type="compositionally biased region" description="Polar residues" evidence="1">
    <location>
        <begin position="483"/>
        <end position="497"/>
    </location>
</feature>
<feature type="compositionally biased region" description="Polar residues" evidence="1">
    <location>
        <begin position="505"/>
        <end position="520"/>
    </location>
</feature>
<feature type="compositionally biased region" description="Polar residues" evidence="1">
    <location>
        <begin position="527"/>
        <end position="547"/>
    </location>
</feature>
<feature type="compositionally biased region" description="Low complexity" evidence="1">
    <location>
        <begin position="560"/>
        <end position="596"/>
    </location>
</feature>
<feature type="compositionally biased region" description="Polar residues" evidence="1">
    <location>
        <begin position="597"/>
        <end position="609"/>
    </location>
</feature>
<feature type="modified residue" description="Phosphoserine" evidence="3">
    <location>
        <position position="537"/>
    </location>
</feature>
<gene>
    <name type="primary">ase1</name>
    <name type="ORF">SPAPB1A10.09</name>
</gene>
<protein>
    <recommendedName>
        <fullName>Anaphase spindle elongation protein 1</fullName>
    </recommendedName>
</protein>
<accession>Q9HDY1</accession>